<reference key="1">
    <citation type="journal article" date="2007" name="Rapid Commun. Mass Spectrom.">
        <title>Rapid mass spectral identification of contryphans. Detection of characteristic peptide ions by fragmentation of intact disulfide-bonded peptides in crude venom.</title>
        <authorList>
            <person name="Thakur S.S."/>
            <person name="Balaram P."/>
        </authorList>
    </citation>
    <scope>PROTEIN SEQUENCE</scope>
    <scope>IDENTIFICATION BY MASS SPECTROMETRY</scope>
    <scope>MASS SPECTROMETRY</scope>
    <scope>SUBCELLULAR LOCATION</scope>
    <scope>HYDROXYLATION AT PRO-3</scope>
    <scope>D-AMINO ACID AT TRP-4</scope>
    <scope>AMIDATION AT CYS-8</scope>
    <scope>DISULFIDE BOND</scope>
    <source>
        <tissue>Venom</tissue>
    </source>
</reference>
<organism>
    <name type="scientific">Conus leopardus</name>
    <name type="common">Leopard cone</name>
    <dbReference type="NCBI Taxonomy" id="101306"/>
    <lineage>
        <taxon>Eukaryota</taxon>
        <taxon>Metazoa</taxon>
        <taxon>Spiralia</taxon>
        <taxon>Lophotrochozoa</taxon>
        <taxon>Mollusca</taxon>
        <taxon>Gastropoda</taxon>
        <taxon>Caenogastropoda</taxon>
        <taxon>Neogastropoda</taxon>
        <taxon>Conoidea</taxon>
        <taxon>Conidae</taxon>
        <taxon>Conus</taxon>
        <taxon>Lithoconus</taxon>
    </lineage>
</organism>
<evidence type="ECO:0000250" key="1">
    <source>
        <dbReference type="UniProtKB" id="P0C248"/>
    </source>
</evidence>
<evidence type="ECO:0000250" key="2">
    <source>
        <dbReference type="UniProtKB" id="P0C250"/>
    </source>
</evidence>
<evidence type="ECO:0000250" key="3">
    <source>
        <dbReference type="UniProtKB" id="P58787"/>
    </source>
</evidence>
<evidence type="ECO:0000250" key="4">
    <source>
        <dbReference type="UniProtKB" id="P62903"/>
    </source>
</evidence>
<evidence type="ECO:0000250" key="5">
    <source>
        <dbReference type="UniProtKB" id="P83047"/>
    </source>
</evidence>
<evidence type="ECO:0000269" key="6">
    <source>
    </source>
</evidence>
<evidence type="ECO:0000305" key="7"/>
<evidence type="ECO:0000305" key="8">
    <source>
    </source>
</evidence>
<keyword id="KW-0027">Amidation</keyword>
<keyword id="KW-0208">D-amino acid</keyword>
<keyword id="KW-0903">Direct protein sequencing</keyword>
<keyword id="KW-1015">Disulfide bond</keyword>
<keyword id="KW-0379">Hydroxylation</keyword>
<keyword id="KW-0872">Ion channel impairing toxin</keyword>
<keyword id="KW-0528">Neurotoxin</keyword>
<keyword id="KW-0964">Secreted</keyword>
<keyword id="KW-0800">Toxin</keyword>
<protein>
    <recommendedName>
        <fullName evidence="7">Contryphan-Le</fullName>
    </recommendedName>
</protein>
<name>COWA_CONLE</name>
<comment type="function">
    <text evidence="1 2 4 5">Its target is unknown, but this toxin may modulate voltage-activated calcium channels (Cav) or calcium-dependent potassium channels (KCa).</text>
</comment>
<comment type="subcellular location">
    <subcellularLocation>
        <location evidence="6">Secreted</location>
    </subcellularLocation>
</comment>
<comment type="tissue specificity">
    <text evidence="8">Expressed by the venom duct.</text>
</comment>
<comment type="domain">
    <text evidence="7">The cysteine framework is C-C.</text>
</comment>
<comment type="mass spectrometry"/>
<comment type="miscellaneous">
    <text evidence="3">Exists in two forms, due to cis-trans isomerization at 2-Cys-hydroxyPro-3. The cis conformation is the major form.</text>
</comment>
<comment type="similarity">
    <text evidence="7">Belongs to the O2 superfamily. Contryphan family.</text>
</comment>
<dbReference type="GO" id="GO:0005576">
    <property type="term" value="C:extracellular region"/>
    <property type="evidence" value="ECO:0007669"/>
    <property type="project" value="UniProtKB-SubCell"/>
</dbReference>
<dbReference type="GO" id="GO:0099106">
    <property type="term" value="F:ion channel regulator activity"/>
    <property type="evidence" value="ECO:0007669"/>
    <property type="project" value="UniProtKB-KW"/>
</dbReference>
<dbReference type="GO" id="GO:0090729">
    <property type="term" value="F:toxin activity"/>
    <property type="evidence" value="ECO:0007669"/>
    <property type="project" value="UniProtKB-KW"/>
</dbReference>
<dbReference type="InterPro" id="IPR011062">
    <property type="entry name" value="Contryphan_CS"/>
</dbReference>
<dbReference type="PROSITE" id="PS60027">
    <property type="entry name" value="CONTRYPHAN"/>
    <property type="match status" value="1"/>
</dbReference>
<accession>P0DP17</accession>
<feature type="peptide" id="PRO_0000439688" description="Contryphan-Le" evidence="6">
    <location>
        <begin position="1"/>
        <end position="8"/>
    </location>
</feature>
<feature type="modified residue" description="4-hydroxyproline" evidence="6">
    <location>
        <position position="3"/>
    </location>
</feature>
<feature type="modified residue" description="D-tryptophan" evidence="6">
    <location>
        <position position="4"/>
    </location>
</feature>
<feature type="modified residue" description="Cysteine amide" evidence="6">
    <location>
        <position position="8"/>
    </location>
</feature>
<feature type="disulfide bond" evidence="6">
    <location>
        <begin position="2"/>
        <end position="8"/>
    </location>
</feature>
<sequence>GCPWEPWC</sequence>
<proteinExistence type="evidence at protein level"/>